<accession>P02177</accession>
<evidence type="ECO:0000250" key="1">
    <source>
        <dbReference type="UniProtKB" id="P02144"/>
    </source>
</evidence>
<evidence type="ECO:0000250" key="2">
    <source>
        <dbReference type="UniProtKB" id="P02185"/>
    </source>
</evidence>
<evidence type="ECO:0000250" key="3">
    <source>
        <dbReference type="UniProtKB" id="P02189"/>
    </source>
</evidence>
<evidence type="ECO:0000250" key="4">
    <source>
        <dbReference type="UniProtKB" id="P04247"/>
    </source>
</evidence>
<evidence type="ECO:0000250" key="5">
    <source>
        <dbReference type="UniProtKB" id="P68082"/>
    </source>
</evidence>
<evidence type="ECO:0000250" key="6">
    <source>
        <dbReference type="UniProtKB" id="Q9QZ76"/>
    </source>
</evidence>
<evidence type="ECO:0000255" key="7">
    <source>
        <dbReference type="PROSITE-ProRule" id="PRU00238"/>
    </source>
</evidence>
<evidence type="ECO:0000269" key="8">
    <source>
    </source>
</evidence>
<keyword id="KW-0963">Cytoplasm</keyword>
<keyword id="KW-0903">Direct protein sequencing</keyword>
<keyword id="KW-0349">Heme</keyword>
<keyword id="KW-0408">Iron</keyword>
<keyword id="KW-0479">Metal-binding</keyword>
<keyword id="KW-0514">Muscle protein</keyword>
<keyword id="KW-0560">Oxidoreductase</keyword>
<keyword id="KW-0561">Oxygen transport</keyword>
<keyword id="KW-0597">Phosphoprotein</keyword>
<keyword id="KW-0813">Transport</keyword>
<protein>
    <recommendedName>
        <fullName>Myoglobin</fullName>
    </recommendedName>
    <alternativeName>
        <fullName evidence="1">Nitrite reductase MB</fullName>
        <ecNumber evidence="1">1.7.-.-</ecNumber>
    </alternativeName>
    <alternativeName>
        <fullName evidence="1">Pseudoperoxidase MB</fullName>
        <ecNumber evidence="1">1.11.1.-</ecNumber>
    </alternativeName>
</protein>
<sequence>MVLSDAEWQLVLNIWAKVEADVAGHGQDILIRLFKGHPETLEKFDKFKHLKTEAEMKASEDLKKHGNTVLTALGGILKKKGHHEAELKPLAQSHATKHKIPIKYLEFISDAIIHVLHSRHPGDFGADAQAAMNKALELFRKDIAAKYKELGFQG</sequence>
<feature type="initiator methionine" description="Removed" evidence="8">
    <location>
        <position position="1"/>
    </location>
</feature>
<feature type="chain" id="PRO_0000053294" description="Myoglobin">
    <location>
        <begin position="2"/>
        <end position="154"/>
    </location>
</feature>
<feature type="domain" description="Globin" evidence="7">
    <location>
        <begin position="2"/>
        <end position="148"/>
    </location>
</feature>
<feature type="binding site" evidence="5">
    <location>
        <position position="65"/>
    </location>
    <ligand>
        <name>nitrite</name>
        <dbReference type="ChEBI" id="CHEBI:16301"/>
    </ligand>
</feature>
<feature type="binding site" evidence="3 7">
    <location>
        <position position="65"/>
    </location>
    <ligand>
        <name>O2</name>
        <dbReference type="ChEBI" id="CHEBI:15379"/>
    </ligand>
</feature>
<feature type="binding site" description="proximal binding residue" evidence="1">
    <location>
        <position position="94"/>
    </location>
    <ligand>
        <name>heme b</name>
        <dbReference type="ChEBI" id="CHEBI:60344"/>
    </ligand>
    <ligandPart>
        <name>Fe</name>
        <dbReference type="ChEBI" id="CHEBI:18248"/>
    </ligandPart>
</feature>
<feature type="modified residue" description="Phosphoserine" evidence="6">
    <location>
        <position position="4"/>
    </location>
</feature>
<feature type="modified residue" description="Phosphothreonine" evidence="4">
    <location>
        <position position="68"/>
    </location>
</feature>
<name>MYG_ESCRO</name>
<reference key="1">
    <citation type="journal article" date="1976" name="Biochemistry">
        <title>Complete primary structure of the major component myoglobin of California gray whale (Eschrichtius gibbosus).</title>
        <authorList>
            <person name="Bogardt R.A. Jr."/>
            <person name="Dwulet F.E."/>
            <person name="Lehman L.D."/>
            <person name="Jones B.N."/>
            <person name="Gurd F.R.N."/>
        </authorList>
    </citation>
    <scope>PROTEIN SEQUENCE OF 2-154</scope>
    <source>
        <tissue>Skeletal muscle</tissue>
    </source>
</reference>
<proteinExistence type="evidence at protein level"/>
<gene>
    <name type="primary">MB</name>
</gene>
<dbReference type="EC" id="1.7.-.-" evidence="1"/>
<dbReference type="EC" id="1.11.1.-" evidence="1"/>
<dbReference type="PIR" id="A02499">
    <property type="entry name" value="MYWHC"/>
</dbReference>
<dbReference type="RefSeq" id="XP_068416897.1">
    <property type="nucleotide sequence ID" value="XM_068560796.1"/>
</dbReference>
<dbReference type="SMR" id="P02177"/>
<dbReference type="GeneID" id="137775129"/>
<dbReference type="GO" id="GO:0070062">
    <property type="term" value="C:extracellular exosome"/>
    <property type="evidence" value="ECO:0007669"/>
    <property type="project" value="TreeGrafter"/>
</dbReference>
<dbReference type="GO" id="GO:0016528">
    <property type="term" value="C:sarcoplasm"/>
    <property type="evidence" value="ECO:0000250"/>
    <property type="project" value="UniProtKB"/>
</dbReference>
<dbReference type="GO" id="GO:0020037">
    <property type="term" value="F:heme binding"/>
    <property type="evidence" value="ECO:0007669"/>
    <property type="project" value="InterPro"/>
</dbReference>
<dbReference type="GO" id="GO:0046872">
    <property type="term" value="F:metal ion binding"/>
    <property type="evidence" value="ECO:0007669"/>
    <property type="project" value="UniProtKB-KW"/>
</dbReference>
<dbReference type="GO" id="GO:0098809">
    <property type="term" value="F:nitrite reductase activity"/>
    <property type="evidence" value="ECO:0000250"/>
    <property type="project" value="UniProtKB"/>
</dbReference>
<dbReference type="GO" id="GO:0019825">
    <property type="term" value="F:oxygen binding"/>
    <property type="evidence" value="ECO:0007669"/>
    <property type="project" value="InterPro"/>
</dbReference>
<dbReference type="GO" id="GO:0005344">
    <property type="term" value="F:oxygen carrier activity"/>
    <property type="evidence" value="ECO:0000250"/>
    <property type="project" value="UniProtKB"/>
</dbReference>
<dbReference type="GO" id="GO:0004601">
    <property type="term" value="F:peroxidase activity"/>
    <property type="evidence" value="ECO:0000250"/>
    <property type="project" value="UniProtKB"/>
</dbReference>
<dbReference type="GO" id="GO:0019430">
    <property type="term" value="P:removal of superoxide radicals"/>
    <property type="evidence" value="ECO:0000250"/>
    <property type="project" value="UniProtKB"/>
</dbReference>
<dbReference type="CDD" id="cd08926">
    <property type="entry name" value="Mb"/>
    <property type="match status" value="1"/>
</dbReference>
<dbReference type="Gene3D" id="6.10.140.2100">
    <property type="match status" value="1"/>
</dbReference>
<dbReference type="Gene3D" id="6.10.140.2110">
    <property type="match status" value="1"/>
</dbReference>
<dbReference type="InterPro" id="IPR000971">
    <property type="entry name" value="Globin"/>
</dbReference>
<dbReference type="InterPro" id="IPR009050">
    <property type="entry name" value="Globin-like_sf"/>
</dbReference>
<dbReference type="InterPro" id="IPR002335">
    <property type="entry name" value="Myoglobin"/>
</dbReference>
<dbReference type="PANTHER" id="PTHR47132">
    <property type="entry name" value="MYOGLOBIN"/>
    <property type="match status" value="1"/>
</dbReference>
<dbReference type="PANTHER" id="PTHR47132:SF1">
    <property type="entry name" value="MYOGLOBIN"/>
    <property type="match status" value="1"/>
</dbReference>
<dbReference type="Pfam" id="PF00042">
    <property type="entry name" value="Globin"/>
    <property type="match status" value="1"/>
</dbReference>
<dbReference type="PRINTS" id="PR00613">
    <property type="entry name" value="MYOGLOBIN"/>
</dbReference>
<dbReference type="SUPFAM" id="SSF46458">
    <property type="entry name" value="Globin-like"/>
    <property type="match status" value="1"/>
</dbReference>
<dbReference type="PROSITE" id="PS01033">
    <property type="entry name" value="GLOBIN"/>
    <property type="match status" value="1"/>
</dbReference>
<comment type="function">
    <text evidence="1">Monomeric heme protein which primary function is to store oxygen and facilitate its diffusion within muscle tissues. Reversibly binds oxygen through a pentacoordinated heme iron and enables its timely and efficient release as needed during periods of heightened demand. Depending on the oxidative conditions of tissues and cells, and in addition to its ability to bind oxygen, it also has a nitrite reductase activity whereby it regulates the production of bioactive nitric oxide. Under stress conditions, like hypoxia and anoxia, it also protects cells against reactive oxygen species thanks to its pseudoperoxidase activity.</text>
</comment>
<comment type="catalytic activity">
    <reaction evidence="1">
        <text>Fe(III)-heme b-[protein] + nitric oxide + H2O = Fe(II)-heme b-[protein] + nitrite + 2 H(+)</text>
        <dbReference type="Rhea" id="RHEA:77711"/>
        <dbReference type="Rhea" id="RHEA-COMP:18975"/>
        <dbReference type="Rhea" id="RHEA-COMP:18976"/>
        <dbReference type="ChEBI" id="CHEBI:15377"/>
        <dbReference type="ChEBI" id="CHEBI:15378"/>
        <dbReference type="ChEBI" id="CHEBI:16301"/>
        <dbReference type="ChEBI" id="CHEBI:16480"/>
        <dbReference type="ChEBI" id="CHEBI:55376"/>
        <dbReference type="ChEBI" id="CHEBI:60344"/>
    </reaction>
    <physiologicalReaction direction="right-to-left" evidence="1">
        <dbReference type="Rhea" id="RHEA:77713"/>
    </physiologicalReaction>
</comment>
<comment type="catalytic activity">
    <reaction evidence="1">
        <text>H2O2 + AH2 = A + 2 H2O</text>
        <dbReference type="Rhea" id="RHEA:30275"/>
        <dbReference type="ChEBI" id="CHEBI:13193"/>
        <dbReference type="ChEBI" id="CHEBI:15377"/>
        <dbReference type="ChEBI" id="CHEBI:16240"/>
        <dbReference type="ChEBI" id="CHEBI:17499"/>
    </reaction>
</comment>
<comment type="subunit">
    <text evidence="2">Monomeric.</text>
</comment>
<comment type="subcellular location">
    <subcellularLocation>
        <location evidence="1">Cytoplasm</location>
        <location evidence="1">Sarcoplasm</location>
    </subcellularLocation>
</comment>
<comment type="similarity">
    <text evidence="7">Belongs to the globin family.</text>
</comment>
<organism>
    <name type="scientific">Eschrichtius robustus</name>
    <name type="common">California gray whale</name>
    <name type="synonym">Eschrichtius gibbosus</name>
    <dbReference type="NCBI Taxonomy" id="9764"/>
    <lineage>
        <taxon>Eukaryota</taxon>
        <taxon>Metazoa</taxon>
        <taxon>Chordata</taxon>
        <taxon>Craniata</taxon>
        <taxon>Vertebrata</taxon>
        <taxon>Euteleostomi</taxon>
        <taxon>Mammalia</taxon>
        <taxon>Eutheria</taxon>
        <taxon>Laurasiatheria</taxon>
        <taxon>Artiodactyla</taxon>
        <taxon>Whippomorpha</taxon>
        <taxon>Cetacea</taxon>
        <taxon>Mysticeti</taxon>
        <taxon>Eschrichtiidae</taxon>
        <taxon>Eschrichtius</taxon>
    </lineage>
</organism>